<dbReference type="EC" id="4.1.1.39" evidence="1"/>
<dbReference type="EMBL" id="D28332">
    <property type="protein sequence ID" value="BAA05704.1"/>
    <property type="molecule type" value="Genomic_DNA"/>
</dbReference>
<dbReference type="SMR" id="P92306"/>
<dbReference type="GO" id="GO:0009507">
    <property type="term" value="C:chloroplast"/>
    <property type="evidence" value="ECO:0007669"/>
    <property type="project" value="UniProtKB-SubCell"/>
</dbReference>
<dbReference type="GO" id="GO:0000287">
    <property type="term" value="F:magnesium ion binding"/>
    <property type="evidence" value="ECO:0007669"/>
    <property type="project" value="InterPro"/>
</dbReference>
<dbReference type="GO" id="GO:0004497">
    <property type="term" value="F:monooxygenase activity"/>
    <property type="evidence" value="ECO:0007669"/>
    <property type="project" value="UniProtKB-KW"/>
</dbReference>
<dbReference type="GO" id="GO:0016984">
    <property type="term" value="F:ribulose-bisphosphate carboxylase activity"/>
    <property type="evidence" value="ECO:0007669"/>
    <property type="project" value="UniProtKB-EC"/>
</dbReference>
<dbReference type="GO" id="GO:0009853">
    <property type="term" value="P:photorespiration"/>
    <property type="evidence" value="ECO:0007669"/>
    <property type="project" value="UniProtKB-KW"/>
</dbReference>
<dbReference type="GO" id="GO:0019253">
    <property type="term" value="P:reductive pentose-phosphate cycle"/>
    <property type="evidence" value="ECO:0007669"/>
    <property type="project" value="UniProtKB-KW"/>
</dbReference>
<dbReference type="CDD" id="cd08212">
    <property type="entry name" value="RuBisCO_large_I"/>
    <property type="match status" value="1"/>
</dbReference>
<dbReference type="FunFam" id="3.20.20.110:FF:000001">
    <property type="entry name" value="Ribulose bisphosphate carboxylase large chain"/>
    <property type="match status" value="1"/>
</dbReference>
<dbReference type="FunFam" id="3.30.70.150:FF:000001">
    <property type="entry name" value="Ribulose bisphosphate carboxylase large chain"/>
    <property type="match status" value="1"/>
</dbReference>
<dbReference type="Gene3D" id="3.20.20.110">
    <property type="entry name" value="Ribulose bisphosphate carboxylase, large subunit, C-terminal domain"/>
    <property type="match status" value="1"/>
</dbReference>
<dbReference type="Gene3D" id="3.30.70.150">
    <property type="entry name" value="RuBisCO large subunit, N-terminal domain"/>
    <property type="match status" value="1"/>
</dbReference>
<dbReference type="HAMAP" id="MF_01338">
    <property type="entry name" value="RuBisCO_L_type1"/>
    <property type="match status" value="1"/>
</dbReference>
<dbReference type="InterPro" id="IPR033966">
    <property type="entry name" value="RuBisCO"/>
</dbReference>
<dbReference type="InterPro" id="IPR020878">
    <property type="entry name" value="RuBisCo_large_chain_AS"/>
</dbReference>
<dbReference type="InterPro" id="IPR000685">
    <property type="entry name" value="RuBisCO_lsu_C"/>
</dbReference>
<dbReference type="InterPro" id="IPR036376">
    <property type="entry name" value="RuBisCO_lsu_C_sf"/>
</dbReference>
<dbReference type="InterPro" id="IPR017443">
    <property type="entry name" value="RuBisCO_lsu_fd_N"/>
</dbReference>
<dbReference type="InterPro" id="IPR036422">
    <property type="entry name" value="RuBisCO_lsu_N_sf"/>
</dbReference>
<dbReference type="InterPro" id="IPR020888">
    <property type="entry name" value="RuBisCO_lsuI"/>
</dbReference>
<dbReference type="NCBIfam" id="NF003252">
    <property type="entry name" value="PRK04208.1"/>
    <property type="match status" value="1"/>
</dbReference>
<dbReference type="PANTHER" id="PTHR42704">
    <property type="entry name" value="RIBULOSE BISPHOSPHATE CARBOXYLASE"/>
    <property type="match status" value="1"/>
</dbReference>
<dbReference type="PANTHER" id="PTHR42704:SF15">
    <property type="entry name" value="RIBULOSE BISPHOSPHATE CARBOXYLASE LARGE CHAIN"/>
    <property type="match status" value="1"/>
</dbReference>
<dbReference type="Pfam" id="PF00016">
    <property type="entry name" value="RuBisCO_large"/>
    <property type="match status" value="1"/>
</dbReference>
<dbReference type="Pfam" id="PF02788">
    <property type="entry name" value="RuBisCO_large_N"/>
    <property type="match status" value="1"/>
</dbReference>
<dbReference type="SFLD" id="SFLDG01052">
    <property type="entry name" value="RuBisCO"/>
    <property type="match status" value="1"/>
</dbReference>
<dbReference type="SFLD" id="SFLDS00014">
    <property type="entry name" value="RuBisCO"/>
    <property type="match status" value="1"/>
</dbReference>
<dbReference type="SFLD" id="SFLDG00301">
    <property type="entry name" value="RuBisCO-like_proteins"/>
    <property type="match status" value="1"/>
</dbReference>
<dbReference type="SUPFAM" id="SSF51649">
    <property type="entry name" value="RuBisCo, C-terminal domain"/>
    <property type="match status" value="1"/>
</dbReference>
<dbReference type="SUPFAM" id="SSF54966">
    <property type="entry name" value="RuBisCO, large subunit, small (N-terminal) domain"/>
    <property type="match status" value="1"/>
</dbReference>
<dbReference type="PROSITE" id="PS00157">
    <property type="entry name" value="RUBISCO_LARGE"/>
    <property type="match status" value="1"/>
</dbReference>
<gene>
    <name evidence="1" type="primary">rbcL</name>
</gene>
<geneLocation type="chloroplast"/>
<comment type="function">
    <text evidence="1">RuBisCO catalyzes two reactions: the carboxylation of D-ribulose 1,5-bisphosphate, the primary event in carbon dioxide fixation, as well as the oxidative fragmentation of the pentose substrate in the photorespiration process. Both reactions occur simultaneously and in competition at the same active site.</text>
</comment>
<comment type="catalytic activity">
    <reaction evidence="1">
        <text>2 (2R)-3-phosphoglycerate + 2 H(+) = D-ribulose 1,5-bisphosphate + CO2 + H2O</text>
        <dbReference type="Rhea" id="RHEA:23124"/>
        <dbReference type="ChEBI" id="CHEBI:15377"/>
        <dbReference type="ChEBI" id="CHEBI:15378"/>
        <dbReference type="ChEBI" id="CHEBI:16526"/>
        <dbReference type="ChEBI" id="CHEBI:57870"/>
        <dbReference type="ChEBI" id="CHEBI:58272"/>
        <dbReference type="EC" id="4.1.1.39"/>
    </reaction>
</comment>
<comment type="catalytic activity">
    <reaction evidence="1">
        <text>D-ribulose 1,5-bisphosphate + O2 = 2-phosphoglycolate + (2R)-3-phosphoglycerate + 2 H(+)</text>
        <dbReference type="Rhea" id="RHEA:36631"/>
        <dbReference type="ChEBI" id="CHEBI:15378"/>
        <dbReference type="ChEBI" id="CHEBI:15379"/>
        <dbReference type="ChEBI" id="CHEBI:57870"/>
        <dbReference type="ChEBI" id="CHEBI:58033"/>
        <dbReference type="ChEBI" id="CHEBI:58272"/>
    </reaction>
</comment>
<comment type="cofactor">
    <cofactor evidence="1">
        <name>Mg(2+)</name>
        <dbReference type="ChEBI" id="CHEBI:18420"/>
    </cofactor>
    <text evidence="1">Binds 1 Mg(2+) ion per subunit.</text>
</comment>
<comment type="subunit">
    <text evidence="1">Heterohexadecamer of 8 large chains and 8 small chains; disulfide-linked. The disulfide link is formed within the large subunit homodimers.</text>
</comment>
<comment type="subcellular location">
    <subcellularLocation>
        <location>Plastid</location>
        <location>Chloroplast</location>
    </subcellularLocation>
</comment>
<comment type="PTM">
    <text evidence="1">The disulfide bond which can form in the large chain dimeric partners within the hexadecamer appears to be associated with oxidative stress and protein turnover.</text>
</comment>
<comment type="miscellaneous">
    <text evidence="1">The basic functional RuBisCO is composed of a large chain homodimer in a 'head-to-tail' conformation. In form I RuBisCO this homodimer is arranged in a barrel-like tetramer with the small subunits forming a tetrameric 'cap' on each end of the 'barrel'.</text>
</comment>
<comment type="similarity">
    <text evidence="1">Belongs to the RuBisCO large chain family. Type I subfamily.</text>
</comment>
<accession>P92306</accession>
<organism>
    <name type="scientific">Iris ensata</name>
    <name type="common">Japanese iris</name>
    <name type="synonym">Iris kaempferi</name>
    <dbReference type="NCBI Taxonomy" id="34213"/>
    <lineage>
        <taxon>Eukaryota</taxon>
        <taxon>Viridiplantae</taxon>
        <taxon>Streptophyta</taxon>
        <taxon>Embryophyta</taxon>
        <taxon>Tracheophyta</taxon>
        <taxon>Spermatophyta</taxon>
        <taxon>Magnoliopsida</taxon>
        <taxon>Liliopsida</taxon>
        <taxon>Asparagales</taxon>
        <taxon>Iridaceae</taxon>
        <taxon>Iridoideae</taxon>
        <taxon>Irideae</taxon>
        <taxon>Iris</taxon>
    </lineage>
</organism>
<protein>
    <recommendedName>
        <fullName evidence="1">Ribulose bisphosphate carboxylase large chain</fullName>
        <shortName evidence="1">RuBisCO large subunit</shortName>
        <ecNumber evidence="1">4.1.1.39</ecNumber>
    </recommendedName>
</protein>
<proteinExistence type="inferred from homology"/>
<keyword id="KW-0007">Acetylation</keyword>
<keyword id="KW-0113">Calvin cycle</keyword>
<keyword id="KW-0120">Carbon dioxide fixation</keyword>
<keyword id="KW-0150">Chloroplast</keyword>
<keyword id="KW-1015">Disulfide bond</keyword>
<keyword id="KW-0456">Lyase</keyword>
<keyword id="KW-0460">Magnesium</keyword>
<keyword id="KW-0479">Metal-binding</keyword>
<keyword id="KW-0488">Methylation</keyword>
<keyword id="KW-0503">Monooxygenase</keyword>
<keyword id="KW-0560">Oxidoreductase</keyword>
<keyword id="KW-0601">Photorespiration</keyword>
<keyword id="KW-0602">Photosynthesis</keyword>
<keyword id="KW-0934">Plastid</keyword>
<feature type="propeptide" id="PRO_0000031267" evidence="1">
    <location>
        <begin position="1"/>
        <end position="2"/>
    </location>
</feature>
<feature type="chain" id="PRO_0000031268" description="Ribulose bisphosphate carboxylase large chain">
    <location>
        <begin position="3"/>
        <end position="469" status="greater than"/>
    </location>
</feature>
<feature type="active site" description="Proton acceptor" evidence="1">
    <location>
        <position position="175"/>
    </location>
</feature>
<feature type="active site" description="Proton acceptor" evidence="1">
    <location>
        <position position="294"/>
    </location>
</feature>
<feature type="binding site" description="in homodimeric partner" evidence="1">
    <location>
        <position position="123"/>
    </location>
    <ligand>
        <name>substrate</name>
    </ligand>
</feature>
<feature type="binding site" evidence="1">
    <location>
        <position position="173"/>
    </location>
    <ligand>
        <name>substrate</name>
    </ligand>
</feature>
<feature type="binding site" evidence="1">
    <location>
        <position position="177"/>
    </location>
    <ligand>
        <name>substrate</name>
    </ligand>
</feature>
<feature type="binding site" description="via carbamate group" evidence="1">
    <location>
        <position position="201"/>
    </location>
    <ligand>
        <name>Mg(2+)</name>
        <dbReference type="ChEBI" id="CHEBI:18420"/>
    </ligand>
</feature>
<feature type="binding site" evidence="1">
    <location>
        <position position="203"/>
    </location>
    <ligand>
        <name>Mg(2+)</name>
        <dbReference type="ChEBI" id="CHEBI:18420"/>
    </ligand>
</feature>
<feature type="binding site" evidence="1">
    <location>
        <position position="204"/>
    </location>
    <ligand>
        <name>Mg(2+)</name>
        <dbReference type="ChEBI" id="CHEBI:18420"/>
    </ligand>
</feature>
<feature type="binding site" evidence="1">
    <location>
        <position position="295"/>
    </location>
    <ligand>
        <name>substrate</name>
    </ligand>
</feature>
<feature type="binding site" evidence="1">
    <location>
        <position position="327"/>
    </location>
    <ligand>
        <name>substrate</name>
    </ligand>
</feature>
<feature type="binding site" evidence="1">
    <location>
        <position position="379"/>
    </location>
    <ligand>
        <name>substrate</name>
    </ligand>
</feature>
<feature type="site" description="Transition state stabilizer" evidence="1">
    <location>
        <position position="334"/>
    </location>
</feature>
<feature type="modified residue" description="N-acetylproline" evidence="1">
    <location>
        <position position="3"/>
    </location>
</feature>
<feature type="modified residue" description="N6,N6,N6-trimethyllysine" evidence="1">
    <location>
        <position position="14"/>
    </location>
</feature>
<feature type="modified residue" description="N6-carboxylysine" evidence="1">
    <location>
        <position position="201"/>
    </location>
</feature>
<feature type="disulfide bond" description="Interchain; in linked form" evidence="1">
    <location>
        <position position="247"/>
    </location>
</feature>
<feature type="non-terminal residue">
    <location>
        <position position="469"/>
    </location>
</feature>
<evidence type="ECO:0000255" key="1">
    <source>
        <dbReference type="HAMAP-Rule" id="MF_01338"/>
    </source>
</evidence>
<sequence>MSPQTETKASVGFKAGVKDYRLTYYTPDYETKDTDILAAFRVTPQPGVPAEEAGAAVAAESSTGTWTTVWTDGLTSLDRYKGRCYHIEAVVGEENQYIGYVAYPLDLFEEGSVTNMFTSIVGNVFGFKALRALRLEDLRIPPAYSKTFQGPPHGIQVERDKLNKYGRPLLGCTIKPKLGLSAKNYGRAVYECLRGGLDFTKDDENVNSQPFMRWRDRFVFCAEAIYKAQAETGEIKGHYLNATAGTCEEMIKRAVFARELGAPIVMHDYLTGGFTANTSLAHYCRDNGLLLHIHRAMHAVIDRQKNHGMHFRVLAKALRMSGGDHIHAGTVVGKLEGEREMTLGFVDLLRDDYIEKDRSRGIFFTQDWVSMPGVLPVASGGIHVWHMPALTEIFGDDSVLQFGGGTIGHPWGNAPGAVANRVALEACVQARNEGRDLAREGNEIIREASSWSPELAAACEVWKAIKFEF</sequence>
<reference key="1">
    <citation type="submission" date="1994-02" db="EMBL/GenBank/DDBJ databases">
        <authorList>
            <person name="Kawano S."/>
        </authorList>
    </citation>
    <scope>NUCLEOTIDE SEQUENCE [GENOMIC DNA]</scope>
</reference>
<name>RBL_IRIEN</name>